<organism>
    <name type="scientific">Eremothecium gossypii (strain ATCC 10895 / CBS 109.51 / FGSC 9923 / NRRL Y-1056)</name>
    <name type="common">Yeast</name>
    <name type="synonym">Ashbya gossypii</name>
    <dbReference type="NCBI Taxonomy" id="284811"/>
    <lineage>
        <taxon>Eukaryota</taxon>
        <taxon>Fungi</taxon>
        <taxon>Dikarya</taxon>
        <taxon>Ascomycota</taxon>
        <taxon>Saccharomycotina</taxon>
        <taxon>Saccharomycetes</taxon>
        <taxon>Saccharomycetales</taxon>
        <taxon>Saccharomycetaceae</taxon>
        <taxon>Eremothecium</taxon>
    </lineage>
</organism>
<keyword id="KW-0067">ATP-binding</keyword>
<keyword id="KW-0227">DNA damage</keyword>
<keyword id="KW-0234">DNA repair</keyword>
<keyword id="KW-0238">DNA-binding</keyword>
<keyword id="KW-0347">Helicase</keyword>
<keyword id="KW-0378">Hydrolase</keyword>
<keyword id="KW-0547">Nucleotide-binding</keyword>
<keyword id="KW-0539">Nucleus</keyword>
<keyword id="KW-1185">Reference proteome</keyword>
<evidence type="ECO:0000250" key="1">
    <source>
        <dbReference type="UniProtKB" id="P40562"/>
    </source>
</evidence>
<evidence type="ECO:0000250" key="2">
    <source>
        <dbReference type="UniProtKB" id="Q9UT23"/>
    </source>
</evidence>
<evidence type="ECO:0000255" key="3">
    <source>
        <dbReference type="PROSITE-ProRule" id="PRU00541"/>
    </source>
</evidence>
<evidence type="ECO:0000255" key="4">
    <source>
        <dbReference type="PROSITE-ProRule" id="PRU00542"/>
    </source>
</evidence>
<evidence type="ECO:0000256" key="5">
    <source>
        <dbReference type="SAM" id="MobiDB-lite"/>
    </source>
</evidence>
<evidence type="ECO:0000305" key="6"/>
<reference key="1">
    <citation type="journal article" date="2004" name="Science">
        <title>The Ashbya gossypii genome as a tool for mapping the ancient Saccharomyces cerevisiae genome.</title>
        <authorList>
            <person name="Dietrich F.S."/>
            <person name="Voegeli S."/>
            <person name="Brachat S."/>
            <person name="Lerch A."/>
            <person name="Gates K."/>
            <person name="Steiner S."/>
            <person name="Mohr C."/>
            <person name="Poehlmann R."/>
            <person name="Luedi P."/>
            <person name="Choi S."/>
            <person name="Wing R.A."/>
            <person name="Flavier A."/>
            <person name="Gaffney T.D."/>
            <person name="Philippsen P."/>
        </authorList>
    </citation>
    <scope>NUCLEOTIDE SEQUENCE [LARGE SCALE GENOMIC DNA]</scope>
    <source>
        <strain>ATCC 10895 / CBS 109.51 / FGSC 9923 / NRRL Y-1056</strain>
    </source>
</reference>
<reference key="2">
    <citation type="journal article" date="2013" name="G3 (Bethesda)">
        <title>Genomes of Ashbya fungi isolated from insects reveal four mating-type loci, numerous translocations, lack of transposons, and distinct gene duplications.</title>
        <authorList>
            <person name="Dietrich F.S."/>
            <person name="Voegeli S."/>
            <person name="Kuo S."/>
            <person name="Philippsen P."/>
        </authorList>
    </citation>
    <scope>GENOME REANNOTATION</scope>
    <scope>SEQUENCE REVISION TO 8</scope>
    <source>
        <strain>ATCC 10895 / CBS 109.51 / FGSC 9923 / NRRL Y-1056</strain>
    </source>
</reference>
<sequence length="1077" mass="122918">MLQHATITKMTDFSDLDDDDIVGLLDQDVNRCVETSVTRHKLAMQRDLTGKVLDGEKRYYEEVVTSVTYKPTHHQLRYENLNTYLYPTNYEVREYQFNIVHRALFENVLCAIPTGMGKTFIASTVMLNYYRWTVGTKIIFTAPTRPLVAQQIKACLGITGIPYNDTAILLDKSRKHREQIWSEKRVFFATPQVVENDLKRGALNPKDVVLLVIDEAHRARGSYAYVELTKFIDRFNTSYRVLALTATPATDLEGVQEVVDNLQISKIELRTEESEDIVRYMKRRDTEEVIVPLIPEIEDIIEQLGIAITPVLKEAVQLGLYDDCEPVNINAFIAMQQSQKILANSSIPEGVKWKNYFILQLLCHVGHMLKRLKIYGIQTFYTYFDNKYREFTTKYGIGKSTNKTAASFYYSSILKNITKTCQAYTANPSFLGHGKLYRVRDELSTFFASAGDDSRVIIFTELRESALELVKCVDNMNDRFIRPHIFIGQAKGKESFDDGEYLRKHAPKGRKKVDRIRRLEEEKRLADEKLRKKEEEKLARTARRTGSSEEAQISGMTQKQQKEVISLFKKGDYNVLVCTSIGEEGLDIGEVDMIICYDTTSSPIKNIQRMGRTGRKRDGRIVLLLSDNEPRKFEQAMEDYAQLQRLIGEESLNYKVTDRIIPKGINPQCQKEFITISEKNSAVNGMEDADSVIKYATQAMLGKLDKRKAVKKSTGKAAPKRFFMPDDVETGIVPAMKLVKSYKYTENGEAFPVAESVKGRRPKSKDTLLDRLEYDSLESELSSPEKATKSQNVVEIRPKLLSDILLKDEDTLHFEHSSSCPKVDSLASVTTLSSDNKSTPDQLKRSQSDNGFGIPPKRQRLCYDTSANCSSTDTHLMEAQSKNKDNPANRKTGEPHYKLEVSPLKREEDDRDVIPQNIAVKPEVPHLTQECLTTGRVYKSEFSKYDGFLTVSERRYFEQNYSPVHLVSLEPRPVFSRSRNRVAIVPHSERVQRLINIFAAMDTDDKVHIIDMHRKHALARRTVHGGPTENSDLLQPSSDGIIVPNDDIRLFSLRPRATDFEDMLEDDEGLSELLDSD</sequence>
<gene>
    <name evidence="1" type="primary">MPH1</name>
    <name type="ordered locus">ADR011C</name>
</gene>
<comment type="function">
    <text evidence="2">ATP-dependent DNA helicase involved in DNA damage repair by homologous recombination and in genome maintenance. Capable of unwinding D-loops. Plays a role in limiting crossover recombinants during mitotic DNA double-strand break (DSB) repair. Component of a FANCM-MHF complex which promotes gene conversion at blocked replication forks, probably by reversal of the stalled fork.</text>
</comment>
<comment type="catalytic activity">
    <reaction evidence="2">
        <text>ATP + H2O = ADP + phosphate + H(+)</text>
        <dbReference type="Rhea" id="RHEA:13065"/>
        <dbReference type="ChEBI" id="CHEBI:15377"/>
        <dbReference type="ChEBI" id="CHEBI:15378"/>
        <dbReference type="ChEBI" id="CHEBI:30616"/>
        <dbReference type="ChEBI" id="CHEBI:43474"/>
        <dbReference type="ChEBI" id="CHEBI:456216"/>
        <dbReference type="EC" id="3.6.4.12"/>
    </reaction>
</comment>
<comment type="subunit">
    <text evidence="2">Interacts with the MHF histone-fold complex to form the FANCM-MHF complex.</text>
</comment>
<comment type="subcellular location">
    <subcellularLocation>
        <location evidence="1">Nucleus</location>
    </subcellularLocation>
</comment>
<comment type="similarity">
    <text evidence="6">Belongs to the DEAD box helicase family. DEAH subfamily. FANCM sub-subfamily.</text>
</comment>
<feature type="chain" id="PRO_0000333362" description="ATP-dependent DNA helicase MPH1">
    <location>
        <begin position="1"/>
        <end position="1077"/>
    </location>
</feature>
<feature type="domain" description="Helicase ATP-binding" evidence="3">
    <location>
        <begin position="99"/>
        <end position="266"/>
    </location>
</feature>
<feature type="domain" description="Helicase C-terminal" evidence="4">
    <location>
        <begin position="511"/>
        <end position="660"/>
    </location>
</feature>
<feature type="region of interest" description="Disordered" evidence="5">
    <location>
        <begin position="536"/>
        <end position="556"/>
    </location>
</feature>
<feature type="region of interest" description="Disordered" evidence="5">
    <location>
        <begin position="831"/>
        <end position="859"/>
    </location>
</feature>
<feature type="short sequence motif" description="DEAH box" evidence="3">
    <location>
        <begin position="214"/>
        <end position="217"/>
    </location>
</feature>
<feature type="compositionally biased region" description="Polar residues" evidence="5">
    <location>
        <begin position="831"/>
        <end position="841"/>
    </location>
</feature>
<feature type="binding site" evidence="3">
    <location>
        <begin position="112"/>
        <end position="119"/>
    </location>
    <ligand>
        <name>ATP</name>
        <dbReference type="ChEBI" id="CHEBI:30616"/>
    </ligand>
</feature>
<dbReference type="EC" id="3.6.4.12" evidence="1 2"/>
<dbReference type="EMBL" id="AE016817">
    <property type="protein sequence ID" value="AAS51931.2"/>
    <property type="molecule type" value="Genomic_DNA"/>
</dbReference>
<dbReference type="RefSeq" id="NP_984107.2">
    <property type="nucleotide sequence ID" value="NM_209460.2"/>
</dbReference>
<dbReference type="SMR" id="Q75AA7"/>
<dbReference type="FunCoup" id="Q75AA7">
    <property type="interactions" value="266"/>
</dbReference>
<dbReference type="STRING" id="284811.Q75AA7"/>
<dbReference type="EnsemblFungi" id="AAS51931">
    <property type="protein sequence ID" value="AAS51931"/>
    <property type="gene ID" value="AGOS_ADR011C"/>
</dbReference>
<dbReference type="GeneID" id="4620256"/>
<dbReference type="KEGG" id="ago:AGOS_ADR011C"/>
<dbReference type="eggNOG" id="KOG0354">
    <property type="taxonomic scope" value="Eukaryota"/>
</dbReference>
<dbReference type="HOGENOM" id="CLU_002513_1_0_1"/>
<dbReference type="InParanoid" id="Q75AA7"/>
<dbReference type="OMA" id="EGIKWRN"/>
<dbReference type="OrthoDB" id="164902at2759"/>
<dbReference type="Proteomes" id="UP000000591">
    <property type="component" value="Chromosome IV"/>
</dbReference>
<dbReference type="GO" id="GO:0005634">
    <property type="term" value="C:nucleus"/>
    <property type="evidence" value="ECO:0007669"/>
    <property type="project" value="UniProtKB-SubCell"/>
</dbReference>
<dbReference type="GO" id="GO:0043138">
    <property type="term" value="F:3'-5' DNA helicase activity"/>
    <property type="evidence" value="ECO:0000318"/>
    <property type="project" value="GO_Central"/>
</dbReference>
<dbReference type="GO" id="GO:0005524">
    <property type="term" value="F:ATP binding"/>
    <property type="evidence" value="ECO:0007669"/>
    <property type="project" value="UniProtKB-KW"/>
</dbReference>
<dbReference type="GO" id="GO:0016887">
    <property type="term" value="F:ATP hydrolysis activity"/>
    <property type="evidence" value="ECO:0007669"/>
    <property type="project" value="RHEA"/>
</dbReference>
<dbReference type="GO" id="GO:0033677">
    <property type="term" value="F:DNA/RNA helicase activity"/>
    <property type="evidence" value="ECO:0007669"/>
    <property type="project" value="EnsemblFungi"/>
</dbReference>
<dbReference type="GO" id="GO:0070336">
    <property type="term" value="F:flap-structured DNA binding"/>
    <property type="evidence" value="ECO:0007669"/>
    <property type="project" value="EnsemblFungi"/>
</dbReference>
<dbReference type="GO" id="GO:0000400">
    <property type="term" value="F:four-way junction DNA binding"/>
    <property type="evidence" value="ECO:0000318"/>
    <property type="project" value="GO_Central"/>
</dbReference>
<dbReference type="GO" id="GO:0009378">
    <property type="term" value="F:four-way junction helicase activity"/>
    <property type="evidence" value="ECO:0000318"/>
    <property type="project" value="GO_Central"/>
</dbReference>
<dbReference type="GO" id="GO:0033567">
    <property type="term" value="P:DNA replication, Okazaki fragment processing"/>
    <property type="evidence" value="ECO:0007669"/>
    <property type="project" value="EnsemblFungi"/>
</dbReference>
<dbReference type="GO" id="GO:0007535">
    <property type="term" value="P:donor selection"/>
    <property type="evidence" value="ECO:0007669"/>
    <property type="project" value="EnsemblFungi"/>
</dbReference>
<dbReference type="GO" id="GO:0045003">
    <property type="term" value="P:double-strand break repair via synthesis-dependent strand annealing"/>
    <property type="evidence" value="ECO:0000318"/>
    <property type="project" value="GO_Central"/>
</dbReference>
<dbReference type="GO" id="GO:0036297">
    <property type="term" value="P:interstrand cross-link repair"/>
    <property type="evidence" value="ECO:0000318"/>
    <property type="project" value="GO_Central"/>
</dbReference>
<dbReference type="GO" id="GO:0060543">
    <property type="term" value="P:negative regulation of strand invasion"/>
    <property type="evidence" value="ECO:0007669"/>
    <property type="project" value="EnsemblFungi"/>
</dbReference>
<dbReference type="CDD" id="cd18033">
    <property type="entry name" value="DEXDc_FANCM"/>
    <property type="match status" value="1"/>
</dbReference>
<dbReference type="CDD" id="cd12091">
    <property type="entry name" value="FANCM_ID"/>
    <property type="match status" value="1"/>
</dbReference>
<dbReference type="FunFam" id="3.40.50.300:FF:000861">
    <property type="entry name" value="Fanconi anemia, complementation group M"/>
    <property type="match status" value="1"/>
</dbReference>
<dbReference type="Gene3D" id="3.40.50.300">
    <property type="entry name" value="P-loop containing nucleotide triphosphate hydrolases"/>
    <property type="match status" value="2"/>
</dbReference>
<dbReference type="InterPro" id="IPR011545">
    <property type="entry name" value="DEAD/DEAH_box_helicase_dom"/>
</dbReference>
<dbReference type="InterPro" id="IPR039686">
    <property type="entry name" value="FANCM/Mph1-like_ID"/>
</dbReference>
<dbReference type="InterPro" id="IPR044749">
    <property type="entry name" value="FANCM_DEXDc"/>
</dbReference>
<dbReference type="InterPro" id="IPR014001">
    <property type="entry name" value="Helicase_ATP-bd"/>
</dbReference>
<dbReference type="InterPro" id="IPR001650">
    <property type="entry name" value="Helicase_C-like"/>
</dbReference>
<dbReference type="InterPro" id="IPR027417">
    <property type="entry name" value="P-loop_NTPase"/>
</dbReference>
<dbReference type="PANTHER" id="PTHR14025">
    <property type="entry name" value="FANCONI ANEMIA GROUP M FANCM FAMILY MEMBER"/>
    <property type="match status" value="1"/>
</dbReference>
<dbReference type="PANTHER" id="PTHR14025:SF20">
    <property type="entry name" value="FANCONI ANEMIA GROUP M PROTEIN"/>
    <property type="match status" value="1"/>
</dbReference>
<dbReference type="Pfam" id="PF00270">
    <property type="entry name" value="DEAD"/>
    <property type="match status" value="1"/>
</dbReference>
<dbReference type="Pfam" id="PF00271">
    <property type="entry name" value="Helicase_C"/>
    <property type="match status" value="1"/>
</dbReference>
<dbReference type="SMART" id="SM00487">
    <property type="entry name" value="DEXDc"/>
    <property type="match status" value="1"/>
</dbReference>
<dbReference type="SMART" id="SM00490">
    <property type="entry name" value="HELICc"/>
    <property type="match status" value="1"/>
</dbReference>
<dbReference type="SUPFAM" id="SSF52540">
    <property type="entry name" value="P-loop containing nucleoside triphosphate hydrolases"/>
    <property type="match status" value="1"/>
</dbReference>
<dbReference type="PROSITE" id="PS51192">
    <property type="entry name" value="HELICASE_ATP_BIND_1"/>
    <property type="match status" value="1"/>
</dbReference>
<dbReference type="PROSITE" id="PS51194">
    <property type="entry name" value="HELICASE_CTER"/>
    <property type="match status" value="1"/>
</dbReference>
<proteinExistence type="inferred from homology"/>
<accession>Q75AA7</accession>
<protein>
    <recommendedName>
        <fullName evidence="1">ATP-dependent DNA helicase MPH1</fullName>
        <ecNumber evidence="1 2">3.6.4.12</ecNumber>
    </recommendedName>
    <alternativeName>
        <fullName evidence="2">FANCM-like protein 1</fullName>
    </alternativeName>
</protein>
<name>MPH1_EREGS</name>